<keyword id="KW-0090">Biological rhythms</keyword>
<keyword id="KW-0175">Coiled coil</keyword>
<keyword id="KW-0963">Cytoplasm</keyword>
<keyword id="KW-0539">Nucleus</keyword>
<keyword id="KW-1185">Reference proteome</keyword>
<keyword id="KW-0678">Repressor</keyword>
<keyword id="KW-0804">Transcription</keyword>
<keyword id="KW-0805">Transcription regulation</keyword>
<dbReference type="EMBL" id="BC070773">
    <property type="protein sequence ID" value="AAH70773.1"/>
    <property type="molecule type" value="mRNA"/>
</dbReference>
<dbReference type="RefSeq" id="NP_001084768.1">
    <property type="nucleotide sequence ID" value="NM_001091299.1"/>
</dbReference>
<dbReference type="SMR" id="Q6NRH7"/>
<dbReference type="DNASU" id="431803"/>
<dbReference type="GeneID" id="431803"/>
<dbReference type="KEGG" id="xla:431803"/>
<dbReference type="AGR" id="Xenbase:XB-GENE-6251780"/>
<dbReference type="CTD" id="431803"/>
<dbReference type="Xenbase" id="XB-GENE-6251780">
    <property type="gene designation" value="cipc.S"/>
</dbReference>
<dbReference type="OrthoDB" id="6374619at2759"/>
<dbReference type="Proteomes" id="UP000186698">
    <property type="component" value="Chromosome 8S"/>
</dbReference>
<dbReference type="Bgee" id="431803">
    <property type="expression patterns" value="Expressed in egg cell and 19 other cell types or tissues"/>
</dbReference>
<dbReference type="GO" id="GO:0005829">
    <property type="term" value="C:cytosol"/>
    <property type="evidence" value="ECO:0007669"/>
    <property type="project" value="UniProtKB-SubCell"/>
</dbReference>
<dbReference type="GO" id="GO:0005634">
    <property type="term" value="C:nucleus"/>
    <property type="evidence" value="ECO:0000250"/>
    <property type="project" value="UniProtKB"/>
</dbReference>
<dbReference type="GO" id="GO:0042754">
    <property type="term" value="P:negative regulation of circadian rhythm"/>
    <property type="evidence" value="ECO:0000250"/>
    <property type="project" value="UniProtKB"/>
</dbReference>
<dbReference type="GO" id="GO:0045892">
    <property type="term" value="P:negative regulation of DNA-templated transcription"/>
    <property type="evidence" value="ECO:0000250"/>
    <property type="project" value="UniProtKB"/>
</dbReference>
<dbReference type="GO" id="GO:0048511">
    <property type="term" value="P:rhythmic process"/>
    <property type="evidence" value="ECO:0007669"/>
    <property type="project" value="UniProtKB-KW"/>
</dbReference>
<dbReference type="InterPro" id="IPR031602">
    <property type="entry name" value="CIPC"/>
</dbReference>
<dbReference type="PANTHER" id="PTHR34648">
    <property type="entry name" value="CLOCK-INTERACTING PACEMAKER"/>
    <property type="match status" value="1"/>
</dbReference>
<dbReference type="PANTHER" id="PTHR34648:SF1">
    <property type="entry name" value="CLOCK-INTERACTING PACEMAKER"/>
    <property type="match status" value="1"/>
</dbReference>
<dbReference type="Pfam" id="PF15800">
    <property type="entry name" value="CiPC"/>
    <property type="match status" value="2"/>
</dbReference>
<gene>
    <name type="primary">cipc</name>
</gene>
<feature type="chain" id="PRO_0000256136" description="CLOCK-interacting pacemaker">
    <location>
        <begin position="1"/>
        <end position="346"/>
    </location>
</feature>
<feature type="region of interest" description="Disordered" evidence="4">
    <location>
        <begin position="1"/>
        <end position="83"/>
    </location>
</feature>
<feature type="region of interest" description="Disordered" evidence="4">
    <location>
        <begin position="167"/>
        <end position="228"/>
    </location>
</feature>
<feature type="coiled-coil region" evidence="3">
    <location>
        <begin position="283"/>
        <end position="315"/>
    </location>
</feature>
<feature type="compositionally biased region" description="Basic and acidic residues" evidence="4">
    <location>
        <begin position="1"/>
        <end position="42"/>
    </location>
</feature>
<feature type="compositionally biased region" description="Polar residues" evidence="4">
    <location>
        <begin position="50"/>
        <end position="68"/>
    </location>
</feature>
<feature type="compositionally biased region" description="Basic residues" evidence="4">
    <location>
        <begin position="179"/>
        <end position="192"/>
    </location>
</feature>
<feature type="compositionally biased region" description="Polar residues" evidence="4">
    <location>
        <begin position="205"/>
        <end position="222"/>
    </location>
</feature>
<protein>
    <recommendedName>
        <fullName>CLOCK-interacting pacemaker</fullName>
    </recommendedName>
    <alternativeName>
        <fullName>CLOCK-interacting circadian protein</fullName>
    </alternativeName>
</protein>
<comment type="function">
    <text evidence="1">Transcriptional repressor which acts as a negative-feedback regulator of CLOCK-BMAL1 transcriptional activity in the circadian-clock mechanism. The physiological relevance of these observations is unsure.</text>
</comment>
<comment type="subcellular location">
    <subcellularLocation>
        <location evidence="1">Nucleus</location>
    </subcellularLocation>
    <subcellularLocation>
        <location evidence="2">Cytoplasm</location>
        <location evidence="2">Cytosol</location>
    </subcellularLocation>
    <text evidence="1 2">Predominantly localizes to the nucleus, where it co-localizes with CLOCK. At the G1/S boundary, partially translocated to the cytosol.</text>
</comment>
<evidence type="ECO:0000250" key="1">
    <source>
        <dbReference type="UniProtKB" id="Q8R0W1"/>
    </source>
</evidence>
<evidence type="ECO:0000250" key="2">
    <source>
        <dbReference type="UniProtKB" id="Q9C0C6"/>
    </source>
</evidence>
<evidence type="ECO:0000255" key="3"/>
<evidence type="ECO:0000256" key="4">
    <source>
        <dbReference type="SAM" id="MobiDB-lite"/>
    </source>
</evidence>
<sequence>MEKNQKCATEQERFKARSGHGDGQRAEPRKTQTTTESDKDSGYSDVASECLSSVEQTDTEEGPTTSRWNVALKPSGKTPSQPQSLVVLKNLLVDQGSGPEPNASSWAVHPSIQLLQTSPQIVFFPPTVSSSKPSTCRKDTKYLPILKSYTKIAPHPSHRVSNISLPCARKRGPDERPHNQTKRQCSKGHSGSRKGMDAATLLDTGVQQGPVDQNVKESSVSAKNKELDMQLTTQNINSNEKGSRVASLDTQQNLLSAGQQNKSQRFQNTLDILHRSGLLSIAMKTKELARHNQATQSQLEKLQEQVQLYATAMSSNNPHDWQRLQDSLAEVVKGDTEDLSVREMDL</sequence>
<name>CIPC_XENLA</name>
<reference key="1">
    <citation type="submission" date="2004-05" db="EMBL/GenBank/DDBJ databases">
        <authorList>
            <consortium name="NIH - Xenopus Gene Collection (XGC) project"/>
        </authorList>
    </citation>
    <scope>NUCLEOTIDE SEQUENCE [LARGE SCALE MRNA]</scope>
    <source>
        <tissue>Oocyte</tissue>
    </source>
</reference>
<organism>
    <name type="scientific">Xenopus laevis</name>
    <name type="common">African clawed frog</name>
    <dbReference type="NCBI Taxonomy" id="8355"/>
    <lineage>
        <taxon>Eukaryota</taxon>
        <taxon>Metazoa</taxon>
        <taxon>Chordata</taxon>
        <taxon>Craniata</taxon>
        <taxon>Vertebrata</taxon>
        <taxon>Euteleostomi</taxon>
        <taxon>Amphibia</taxon>
        <taxon>Batrachia</taxon>
        <taxon>Anura</taxon>
        <taxon>Pipoidea</taxon>
        <taxon>Pipidae</taxon>
        <taxon>Xenopodinae</taxon>
        <taxon>Xenopus</taxon>
        <taxon>Xenopus</taxon>
    </lineage>
</organism>
<proteinExistence type="evidence at transcript level"/>
<accession>Q6NRH7</accession>